<feature type="chain" id="PRO_0000254244" description="ATP synthase subunit beta">
    <location>
        <begin position="1"/>
        <end position="481"/>
    </location>
</feature>
<feature type="binding site" evidence="1">
    <location>
        <begin position="167"/>
        <end position="174"/>
    </location>
    <ligand>
        <name>ATP</name>
        <dbReference type="ChEBI" id="CHEBI:30616"/>
    </ligand>
</feature>
<evidence type="ECO:0000255" key="1">
    <source>
        <dbReference type="HAMAP-Rule" id="MF_01347"/>
    </source>
</evidence>
<dbReference type="EC" id="7.1.2.2" evidence="1"/>
<dbReference type="EMBL" id="BX248356">
    <property type="protein sequence ID" value="CAE49572.1"/>
    <property type="molecule type" value="Genomic_DNA"/>
</dbReference>
<dbReference type="RefSeq" id="WP_010934769.1">
    <property type="nucleotide sequence ID" value="NC_002935.2"/>
</dbReference>
<dbReference type="SMR" id="Q6NHS9"/>
<dbReference type="STRING" id="257309.DIP1052"/>
<dbReference type="KEGG" id="cdi:DIP1052"/>
<dbReference type="PATRIC" id="fig|257309.4.peg.1035"/>
<dbReference type="HOGENOM" id="CLU_022398_0_2_11"/>
<dbReference type="Proteomes" id="UP000002198">
    <property type="component" value="Chromosome"/>
</dbReference>
<dbReference type="GO" id="GO:0005886">
    <property type="term" value="C:plasma membrane"/>
    <property type="evidence" value="ECO:0007669"/>
    <property type="project" value="UniProtKB-SubCell"/>
</dbReference>
<dbReference type="GO" id="GO:0045259">
    <property type="term" value="C:proton-transporting ATP synthase complex"/>
    <property type="evidence" value="ECO:0007669"/>
    <property type="project" value="UniProtKB-KW"/>
</dbReference>
<dbReference type="GO" id="GO:0005524">
    <property type="term" value="F:ATP binding"/>
    <property type="evidence" value="ECO:0007669"/>
    <property type="project" value="UniProtKB-UniRule"/>
</dbReference>
<dbReference type="GO" id="GO:0016887">
    <property type="term" value="F:ATP hydrolysis activity"/>
    <property type="evidence" value="ECO:0007669"/>
    <property type="project" value="InterPro"/>
</dbReference>
<dbReference type="GO" id="GO:0046933">
    <property type="term" value="F:proton-transporting ATP synthase activity, rotational mechanism"/>
    <property type="evidence" value="ECO:0007669"/>
    <property type="project" value="UniProtKB-UniRule"/>
</dbReference>
<dbReference type="CDD" id="cd18110">
    <property type="entry name" value="ATP-synt_F1_beta_C"/>
    <property type="match status" value="1"/>
</dbReference>
<dbReference type="CDD" id="cd18115">
    <property type="entry name" value="ATP-synt_F1_beta_N"/>
    <property type="match status" value="1"/>
</dbReference>
<dbReference type="CDD" id="cd01133">
    <property type="entry name" value="F1-ATPase_beta_CD"/>
    <property type="match status" value="1"/>
</dbReference>
<dbReference type="FunFam" id="1.10.1140.10:FF:000005">
    <property type="entry name" value="ATP synthase subunit beta"/>
    <property type="match status" value="1"/>
</dbReference>
<dbReference type="FunFam" id="2.40.10.170:FF:000005">
    <property type="entry name" value="ATP synthase subunit beta"/>
    <property type="match status" value="1"/>
</dbReference>
<dbReference type="FunFam" id="3.40.50.300:FF:000004">
    <property type="entry name" value="ATP synthase subunit beta"/>
    <property type="match status" value="1"/>
</dbReference>
<dbReference type="Gene3D" id="2.40.10.170">
    <property type="match status" value="1"/>
</dbReference>
<dbReference type="Gene3D" id="1.10.1140.10">
    <property type="entry name" value="Bovine Mitochondrial F1-atpase, Atp Synthase Beta Chain, Chain D, domain 3"/>
    <property type="match status" value="1"/>
</dbReference>
<dbReference type="Gene3D" id="3.40.50.300">
    <property type="entry name" value="P-loop containing nucleotide triphosphate hydrolases"/>
    <property type="match status" value="1"/>
</dbReference>
<dbReference type="HAMAP" id="MF_01347">
    <property type="entry name" value="ATP_synth_beta_bact"/>
    <property type="match status" value="1"/>
</dbReference>
<dbReference type="InterPro" id="IPR003593">
    <property type="entry name" value="AAA+_ATPase"/>
</dbReference>
<dbReference type="InterPro" id="IPR055190">
    <property type="entry name" value="ATP-synt_VA_C"/>
</dbReference>
<dbReference type="InterPro" id="IPR005722">
    <property type="entry name" value="ATP_synth_F1_bsu"/>
</dbReference>
<dbReference type="InterPro" id="IPR020003">
    <property type="entry name" value="ATPase_a/bsu_AS"/>
</dbReference>
<dbReference type="InterPro" id="IPR050053">
    <property type="entry name" value="ATPase_alpha/beta_chains"/>
</dbReference>
<dbReference type="InterPro" id="IPR004100">
    <property type="entry name" value="ATPase_F1/V1/A1_a/bsu_N"/>
</dbReference>
<dbReference type="InterPro" id="IPR036121">
    <property type="entry name" value="ATPase_F1/V1/A1_a/bsu_N_sf"/>
</dbReference>
<dbReference type="InterPro" id="IPR000194">
    <property type="entry name" value="ATPase_F1/V1/A1_a/bsu_nucl-bd"/>
</dbReference>
<dbReference type="InterPro" id="IPR024034">
    <property type="entry name" value="ATPase_F1/V1_b/a_C"/>
</dbReference>
<dbReference type="InterPro" id="IPR027417">
    <property type="entry name" value="P-loop_NTPase"/>
</dbReference>
<dbReference type="NCBIfam" id="TIGR01039">
    <property type="entry name" value="atpD"/>
    <property type="match status" value="1"/>
</dbReference>
<dbReference type="PANTHER" id="PTHR15184">
    <property type="entry name" value="ATP SYNTHASE"/>
    <property type="match status" value="1"/>
</dbReference>
<dbReference type="PANTHER" id="PTHR15184:SF71">
    <property type="entry name" value="ATP SYNTHASE SUBUNIT BETA, MITOCHONDRIAL"/>
    <property type="match status" value="1"/>
</dbReference>
<dbReference type="Pfam" id="PF00006">
    <property type="entry name" value="ATP-synt_ab"/>
    <property type="match status" value="1"/>
</dbReference>
<dbReference type="Pfam" id="PF02874">
    <property type="entry name" value="ATP-synt_ab_N"/>
    <property type="match status" value="1"/>
</dbReference>
<dbReference type="Pfam" id="PF22919">
    <property type="entry name" value="ATP-synt_VA_C"/>
    <property type="match status" value="1"/>
</dbReference>
<dbReference type="SMART" id="SM00382">
    <property type="entry name" value="AAA"/>
    <property type="match status" value="1"/>
</dbReference>
<dbReference type="SUPFAM" id="SSF47917">
    <property type="entry name" value="C-terminal domain of alpha and beta subunits of F1 ATP synthase"/>
    <property type="match status" value="1"/>
</dbReference>
<dbReference type="SUPFAM" id="SSF50615">
    <property type="entry name" value="N-terminal domain of alpha and beta subunits of F1 ATP synthase"/>
    <property type="match status" value="1"/>
</dbReference>
<dbReference type="SUPFAM" id="SSF52540">
    <property type="entry name" value="P-loop containing nucleoside triphosphate hydrolases"/>
    <property type="match status" value="1"/>
</dbReference>
<dbReference type="PROSITE" id="PS00152">
    <property type="entry name" value="ATPASE_ALPHA_BETA"/>
    <property type="match status" value="1"/>
</dbReference>
<name>ATPB_CORDI</name>
<sequence length="481" mass="52262">MTTALEEQNTQQASVAGRVVRVIGPVVDVEFPRGELPALYNALTVEVTLEAVAKTITLEVAQHLGDNLVRAVSMAPTDGLVRGAVVTDSGKPISVPVGDVVKGHVFNALGDCLDEPGLGRDGEQWGIHRDPPPFDQLEGKTEILETGIKVIDLLTPYVKGGKIGLFGGAGVGKTVLIQEMITRIAREFSGTSVFAGVGERTREGTDLFLEMEEMGVLQDTALVFGQMDEPPGVRMRVALSGLTMAEYFRDVQHQDVLLFIDNIFRFTQAGSEVSTLLGRMPSAVGYQPTLADEMGVLQERITSIKGKSITSLQAVYVPADDYTDPAPATTFAHLDATTELDRAIASKGIYPAVNPLTSTSRILEPGIVGERHYAVAQRVINILQKNKELQDIIAILGMDELSEEDKITVQRARRLERFLGQNFFVAEKFTGIPGSYVPLAHTIDAFERICNGDFDHYPEQAFNGLGGLDDVEAAYKKMTEK</sequence>
<comment type="function">
    <text evidence="1">Produces ATP from ADP in the presence of a proton gradient across the membrane. The catalytic sites are hosted primarily by the beta subunits.</text>
</comment>
<comment type="catalytic activity">
    <reaction evidence="1">
        <text>ATP + H2O + 4 H(+)(in) = ADP + phosphate + 5 H(+)(out)</text>
        <dbReference type="Rhea" id="RHEA:57720"/>
        <dbReference type="ChEBI" id="CHEBI:15377"/>
        <dbReference type="ChEBI" id="CHEBI:15378"/>
        <dbReference type="ChEBI" id="CHEBI:30616"/>
        <dbReference type="ChEBI" id="CHEBI:43474"/>
        <dbReference type="ChEBI" id="CHEBI:456216"/>
        <dbReference type="EC" id="7.1.2.2"/>
    </reaction>
</comment>
<comment type="subunit">
    <text evidence="1">F-type ATPases have 2 components, CF(1) - the catalytic core - and CF(0) - the membrane proton channel. CF(1) has five subunits: alpha(3), beta(3), gamma(1), delta(1), epsilon(1). CF(0) has three main subunits: a(1), b(2) and c(9-12). The alpha and beta chains form an alternating ring which encloses part of the gamma chain. CF(1) is attached to CF(0) by a central stalk formed by the gamma and epsilon chains, while a peripheral stalk is formed by the delta and b chains.</text>
</comment>
<comment type="subcellular location">
    <subcellularLocation>
        <location evidence="1">Cell membrane</location>
        <topology evidence="1">Peripheral membrane protein</topology>
    </subcellularLocation>
</comment>
<comment type="similarity">
    <text evidence="1">Belongs to the ATPase alpha/beta chains family.</text>
</comment>
<reference key="1">
    <citation type="journal article" date="2003" name="Nucleic Acids Res.">
        <title>The complete genome sequence and analysis of Corynebacterium diphtheriae NCTC13129.</title>
        <authorList>
            <person name="Cerdeno-Tarraga A.-M."/>
            <person name="Efstratiou A."/>
            <person name="Dover L.G."/>
            <person name="Holden M.T.G."/>
            <person name="Pallen M.J."/>
            <person name="Bentley S.D."/>
            <person name="Besra G.S."/>
            <person name="Churcher C.M."/>
            <person name="James K.D."/>
            <person name="De Zoysa A."/>
            <person name="Chillingworth T."/>
            <person name="Cronin A."/>
            <person name="Dowd L."/>
            <person name="Feltwell T."/>
            <person name="Hamlin N."/>
            <person name="Holroyd S."/>
            <person name="Jagels K."/>
            <person name="Moule S."/>
            <person name="Quail M.A."/>
            <person name="Rabbinowitsch E."/>
            <person name="Rutherford K.M."/>
            <person name="Thomson N.R."/>
            <person name="Unwin L."/>
            <person name="Whitehead S."/>
            <person name="Barrell B.G."/>
            <person name="Parkhill J."/>
        </authorList>
    </citation>
    <scope>NUCLEOTIDE SEQUENCE [LARGE SCALE GENOMIC DNA]</scope>
    <source>
        <strain>ATCC 700971 / NCTC 13129 / Biotype gravis</strain>
    </source>
</reference>
<proteinExistence type="inferred from homology"/>
<organism>
    <name type="scientific">Corynebacterium diphtheriae (strain ATCC 700971 / NCTC 13129 / Biotype gravis)</name>
    <dbReference type="NCBI Taxonomy" id="257309"/>
    <lineage>
        <taxon>Bacteria</taxon>
        <taxon>Bacillati</taxon>
        <taxon>Actinomycetota</taxon>
        <taxon>Actinomycetes</taxon>
        <taxon>Mycobacteriales</taxon>
        <taxon>Corynebacteriaceae</taxon>
        <taxon>Corynebacterium</taxon>
    </lineage>
</organism>
<keyword id="KW-0066">ATP synthesis</keyword>
<keyword id="KW-0067">ATP-binding</keyword>
<keyword id="KW-1003">Cell membrane</keyword>
<keyword id="KW-0139">CF(1)</keyword>
<keyword id="KW-0375">Hydrogen ion transport</keyword>
<keyword id="KW-0406">Ion transport</keyword>
<keyword id="KW-0472">Membrane</keyword>
<keyword id="KW-0547">Nucleotide-binding</keyword>
<keyword id="KW-1185">Reference proteome</keyword>
<keyword id="KW-1278">Translocase</keyword>
<keyword id="KW-0813">Transport</keyword>
<protein>
    <recommendedName>
        <fullName evidence="1">ATP synthase subunit beta</fullName>
        <ecNumber evidence="1">7.1.2.2</ecNumber>
    </recommendedName>
    <alternativeName>
        <fullName evidence="1">ATP synthase F1 sector subunit beta</fullName>
    </alternativeName>
    <alternativeName>
        <fullName evidence="1">F-ATPase subunit beta</fullName>
    </alternativeName>
</protein>
<accession>Q6NHS9</accession>
<gene>
    <name evidence="1" type="primary">atpD</name>
    <name type="ordered locus">DIP1052</name>
</gene>